<reference key="1">
    <citation type="journal article" date="1999" name="Nature">
        <title>Sequence and analysis of chromosome 4 of the plant Arabidopsis thaliana.</title>
        <authorList>
            <person name="Mayer K.F.X."/>
            <person name="Schueller C."/>
            <person name="Wambutt R."/>
            <person name="Murphy G."/>
            <person name="Volckaert G."/>
            <person name="Pohl T."/>
            <person name="Duesterhoeft A."/>
            <person name="Stiekema W."/>
            <person name="Entian K.-D."/>
            <person name="Terryn N."/>
            <person name="Harris B."/>
            <person name="Ansorge W."/>
            <person name="Brandt P."/>
            <person name="Grivell L.A."/>
            <person name="Rieger M."/>
            <person name="Weichselgartner M."/>
            <person name="de Simone V."/>
            <person name="Obermaier B."/>
            <person name="Mache R."/>
            <person name="Mueller M."/>
            <person name="Kreis M."/>
            <person name="Delseny M."/>
            <person name="Puigdomenech P."/>
            <person name="Watson M."/>
            <person name="Schmidtheini T."/>
            <person name="Reichert B."/>
            <person name="Portetelle D."/>
            <person name="Perez-Alonso M."/>
            <person name="Boutry M."/>
            <person name="Bancroft I."/>
            <person name="Vos P."/>
            <person name="Hoheisel J."/>
            <person name="Zimmermann W."/>
            <person name="Wedler H."/>
            <person name="Ridley P."/>
            <person name="Langham S.-A."/>
            <person name="McCullagh B."/>
            <person name="Bilham L."/>
            <person name="Robben J."/>
            <person name="van der Schueren J."/>
            <person name="Grymonprez B."/>
            <person name="Chuang Y.-J."/>
            <person name="Vandenbussche F."/>
            <person name="Braeken M."/>
            <person name="Weltjens I."/>
            <person name="Voet M."/>
            <person name="Bastiaens I."/>
            <person name="Aert R."/>
            <person name="Defoor E."/>
            <person name="Weitzenegger T."/>
            <person name="Bothe G."/>
            <person name="Ramsperger U."/>
            <person name="Hilbert H."/>
            <person name="Braun M."/>
            <person name="Holzer E."/>
            <person name="Brandt A."/>
            <person name="Peters S."/>
            <person name="van Staveren M."/>
            <person name="Dirkse W."/>
            <person name="Mooijman P."/>
            <person name="Klein Lankhorst R."/>
            <person name="Rose M."/>
            <person name="Hauf J."/>
            <person name="Koetter P."/>
            <person name="Berneiser S."/>
            <person name="Hempel S."/>
            <person name="Feldpausch M."/>
            <person name="Lamberth S."/>
            <person name="Van den Daele H."/>
            <person name="De Keyser A."/>
            <person name="Buysshaert C."/>
            <person name="Gielen J."/>
            <person name="Villarroel R."/>
            <person name="De Clercq R."/>
            <person name="van Montagu M."/>
            <person name="Rogers J."/>
            <person name="Cronin A."/>
            <person name="Quail M.A."/>
            <person name="Bray-Allen S."/>
            <person name="Clark L."/>
            <person name="Doggett J."/>
            <person name="Hall S."/>
            <person name="Kay M."/>
            <person name="Lennard N."/>
            <person name="McLay K."/>
            <person name="Mayes R."/>
            <person name="Pettett A."/>
            <person name="Rajandream M.A."/>
            <person name="Lyne M."/>
            <person name="Benes V."/>
            <person name="Rechmann S."/>
            <person name="Borkova D."/>
            <person name="Bloecker H."/>
            <person name="Scharfe M."/>
            <person name="Grimm M."/>
            <person name="Loehnert T.-H."/>
            <person name="Dose S."/>
            <person name="de Haan M."/>
            <person name="Maarse A.C."/>
            <person name="Schaefer M."/>
            <person name="Mueller-Auer S."/>
            <person name="Gabel C."/>
            <person name="Fuchs M."/>
            <person name="Fartmann B."/>
            <person name="Granderath K."/>
            <person name="Dauner D."/>
            <person name="Herzl A."/>
            <person name="Neumann S."/>
            <person name="Argiriou A."/>
            <person name="Vitale D."/>
            <person name="Liguori R."/>
            <person name="Piravandi E."/>
            <person name="Massenet O."/>
            <person name="Quigley F."/>
            <person name="Clabauld G."/>
            <person name="Muendlein A."/>
            <person name="Felber R."/>
            <person name="Schnabl S."/>
            <person name="Hiller R."/>
            <person name="Schmidt W."/>
            <person name="Lecharny A."/>
            <person name="Aubourg S."/>
            <person name="Chefdor F."/>
            <person name="Cooke R."/>
            <person name="Berger C."/>
            <person name="Monfort A."/>
            <person name="Casacuberta E."/>
            <person name="Gibbons T."/>
            <person name="Weber N."/>
            <person name="Vandenbol M."/>
            <person name="Bargues M."/>
            <person name="Terol J."/>
            <person name="Torres A."/>
            <person name="Perez-Perez A."/>
            <person name="Purnelle B."/>
            <person name="Bent E."/>
            <person name="Johnson S."/>
            <person name="Tacon D."/>
            <person name="Jesse T."/>
            <person name="Heijnen L."/>
            <person name="Schwarz S."/>
            <person name="Scholler P."/>
            <person name="Heber S."/>
            <person name="Francs P."/>
            <person name="Bielke C."/>
            <person name="Frishman D."/>
            <person name="Haase D."/>
            <person name="Lemcke K."/>
            <person name="Mewes H.-W."/>
            <person name="Stocker S."/>
            <person name="Zaccaria P."/>
            <person name="Bevan M."/>
            <person name="Wilson R.K."/>
            <person name="de la Bastide M."/>
            <person name="Habermann K."/>
            <person name="Parnell L."/>
            <person name="Dedhia N."/>
            <person name="Gnoj L."/>
            <person name="Schutz K."/>
            <person name="Huang E."/>
            <person name="Spiegel L."/>
            <person name="Sekhon M."/>
            <person name="Murray J."/>
            <person name="Sheet P."/>
            <person name="Cordes M."/>
            <person name="Abu-Threideh J."/>
            <person name="Stoneking T."/>
            <person name="Kalicki J."/>
            <person name="Graves T."/>
            <person name="Harmon G."/>
            <person name="Edwards J."/>
            <person name="Latreille P."/>
            <person name="Courtney L."/>
            <person name="Cloud J."/>
            <person name="Abbott A."/>
            <person name="Scott K."/>
            <person name="Johnson D."/>
            <person name="Minx P."/>
            <person name="Bentley D."/>
            <person name="Fulton B."/>
            <person name="Miller N."/>
            <person name="Greco T."/>
            <person name="Kemp K."/>
            <person name="Kramer J."/>
            <person name="Fulton L."/>
            <person name="Mardis E."/>
            <person name="Dante M."/>
            <person name="Pepin K."/>
            <person name="Hillier L.W."/>
            <person name="Nelson J."/>
            <person name="Spieth J."/>
            <person name="Ryan E."/>
            <person name="Andrews S."/>
            <person name="Geisel C."/>
            <person name="Layman D."/>
            <person name="Du H."/>
            <person name="Ali J."/>
            <person name="Berghoff A."/>
            <person name="Jones K."/>
            <person name="Drone K."/>
            <person name="Cotton M."/>
            <person name="Joshu C."/>
            <person name="Antonoiu B."/>
            <person name="Zidanic M."/>
            <person name="Strong C."/>
            <person name="Sun H."/>
            <person name="Lamar B."/>
            <person name="Yordan C."/>
            <person name="Ma P."/>
            <person name="Zhong J."/>
            <person name="Preston R."/>
            <person name="Vil D."/>
            <person name="Shekher M."/>
            <person name="Matero A."/>
            <person name="Shah R."/>
            <person name="Swaby I.K."/>
            <person name="O'Shaughnessy A."/>
            <person name="Rodriguez M."/>
            <person name="Hoffman J."/>
            <person name="Till S."/>
            <person name="Granat S."/>
            <person name="Shohdy N."/>
            <person name="Hasegawa A."/>
            <person name="Hameed A."/>
            <person name="Lodhi M."/>
            <person name="Johnson A."/>
            <person name="Chen E."/>
            <person name="Marra M.A."/>
            <person name="Martienssen R."/>
            <person name="McCombie W.R."/>
        </authorList>
    </citation>
    <scope>NUCLEOTIDE SEQUENCE [LARGE SCALE GENOMIC DNA]</scope>
    <source>
        <strain>cv. Columbia</strain>
    </source>
</reference>
<reference key="2">
    <citation type="journal article" date="2017" name="Plant J.">
        <title>Araport11: a complete reannotation of the Arabidopsis thaliana reference genome.</title>
        <authorList>
            <person name="Cheng C.Y."/>
            <person name="Krishnakumar V."/>
            <person name="Chan A.P."/>
            <person name="Thibaud-Nissen F."/>
            <person name="Schobel S."/>
            <person name="Town C.D."/>
        </authorList>
    </citation>
    <scope>GENOME REANNOTATION</scope>
    <source>
        <strain>cv. Columbia</strain>
    </source>
</reference>
<reference key="3">
    <citation type="journal article" date="2003" name="Science">
        <title>Empirical analysis of transcriptional activity in the Arabidopsis genome.</title>
        <authorList>
            <person name="Yamada K."/>
            <person name="Lim J."/>
            <person name="Dale J.M."/>
            <person name="Chen H."/>
            <person name="Shinn P."/>
            <person name="Palm C.J."/>
            <person name="Southwick A.M."/>
            <person name="Wu H.C."/>
            <person name="Kim C.J."/>
            <person name="Nguyen M."/>
            <person name="Pham P.K."/>
            <person name="Cheuk R.F."/>
            <person name="Karlin-Newmann G."/>
            <person name="Liu S.X."/>
            <person name="Lam B."/>
            <person name="Sakano H."/>
            <person name="Wu T."/>
            <person name="Yu G."/>
            <person name="Miranda M."/>
            <person name="Quach H.L."/>
            <person name="Tripp M."/>
            <person name="Chang C.H."/>
            <person name="Lee J.M."/>
            <person name="Toriumi M.J."/>
            <person name="Chan M.M."/>
            <person name="Tang C.C."/>
            <person name="Onodera C.S."/>
            <person name="Deng J.M."/>
            <person name="Akiyama K."/>
            <person name="Ansari Y."/>
            <person name="Arakawa T."/>
            <person name="Banh J."/>
            <person name="Banno F."/>
            <person name="Bowser L."/>
            <person name="Brooks S.Y."/>
            <person name="Carninci P."/>
            <person name="Chao Q."/>
            <person name="Choy N."/>
            <person name="Enju A."/>
            <person name="Goldsmith A.D."/>
            <person name="Gurjal M."/>
            <person name="Hansen N.F."/>
            <person name="Hayashizaki Y."/>
            <person name="Johnson-Hopson C."/>
            <person name="Hsuan V.W."/>
            <person name="Iida K."/>
            <person name="Karnes M."/>
            <person name="Khan S."/>
            <person name="Koesema E."/>
            <person name="Ishida J."/>
            <person name="Jiang P.X."/>
            <person name="Jones T."/>
            <person name="Kawai J."/>
            <person name="Kamiya A."/>
            <person name="Meyers C."/>
            <person name="Nakajima M."/>
            <person name="Narusaka M."/>
            <person name="Seki M."/>
            <person name="Sakurai T."/>
            <person name="Satou M."/>
            <person name="Tamse R."/>
            <person name="Vaysberg M."/>
            <person name="Wallender E.K."/>
            <person name="Wong C."/>
            <person name="Yamamura Y."/>
            <person name="Yuan S."/>
            <person name="Shinozaki K."/>
            <person name="Davis R.W."/>
            <person name="Theologis A."/>
            <person name="Ecker J.R."/>
        </authorList>
    </citation>
    <scope>NUCLEOTIDE SEQUENCE [LARGE SCALE MRNA]</scope>
    <source>
        <strain>cv. Columbia</strain>
    </source>
</reference>
<reference key="4">
    <citation type="journal article" date="2005" name="J. Exp. Bot.">
        <title>A novel gene family in Arabidopsis encoding putative heptahelical transmembrane proteins homologous to human adiponectin receptors and progestin receptors.</title>
        <authorList>
            <person name="Hsieh M.H."/>
            <person name="Goodman H.M."/>
        </authorList>
    </citation>
    <scope>GENE FAMILY</scope>
    <scope>NOMENCLATURE</scope>
    <scope>TISSUE SPECIFICITY</scope>
</reference>
<feature type="chain" id="PRO_0000430050" description="Heptahelical transmembrane protein 4">
    <location>
        <begin position="1"/>
        <end position="385"/>
    </location>
</feature>
<feature type="topological domain" description="Cytoplasmic" evidence="2">
    <location>
        <begin position="1"/>
        <end position="79"/>
    </location>
</feature>
<feature type="transmembrane region" description="Helical" evidence="2">
    <location>
        <begin position="80"/>
        <end position="100"/>
    </location>
</feature>
<feature type="topological domain" description="Extracellular" evidence="2">
    <location>
        <begin position="101"/>
        <end position="191"/>
    </location>
</feature>
<feature type="transmembrane region" description="Helical" evidence="2">
    <location>
        <begin position="192"/>
        <end position="212"/>
    </location>
</feature>
<feature type="topological domain" description="Cytoplasmic" evidence="2">
    <location>
        <begin position="213"/>
        <end position="228"/>
    </location>
</feature>
<feature type="transmembrane region" description="Helical" evidence="2">
    <location>
        <begin position="229"/>
        <end position="249"/>
    </location>
</feature>
<feature type="topological domain" description="Extracellular" evidence="2">
    <location>
        <begin position="250"/>
        <end position="256"/>
    </location>
</feature>
<feature type="transmembrane region" description="Helical" evidence="2">
    <location>
        <begin position="257"/>
        <end position="277"/>
    </location>
</feature>
<feature type="topological domain" description="Cytoplasmic" evidence="2">
    <location>
        <begin position="278"/>
        <end position="288"/>
    </location>
</feature>
<feature type="transmembrane region" description="Helical" evidence="2">
    <location>
        <begin position="289"/>
        <end position="309"/>
    </location>
</feature>
<feature type="topological domain" description="Extracellular" evidence="2">
    <location>
        <begin position="310"/>
        <end position="313"/>
    </location>
</feature>
<feature type="transmembrane region" description="Helical" evidence="2">
    <location>
        <begin position="314"/>
        <end position="334"/>
    </location>
</feature>
<feature type="topological domain" description="Cytoplasmic" evidence="2">
    <location>
        <begin position="335"/>
        <end position="356"/>
    </location>
</feature>
<feature type="transmembrane region" description="Helical" evidence="2">
    <location>
        <begin position="357"/>
        <end position="377"/>
    </location>
</feature>
<feature type="region of interest" description="Disordered" evidence="3">
    <location>
        <begin position="1"/>
        <end position="22"/>
    </location>
</feature>
<feature type="compositionally biased region" description="Basic and acidic residues" evidence="3">
    <location>
        <begin position="1"/>
        <end position="12"/>
    </location>
</feature>
<gene>
    <name type="primary">HHP4</name>
    <name type="ordered locus">At4g37680</name>
    <name type="ORF">F19F18.170</name>
</gene>
<evidence type="ECO:0000250" key="1"/>
<evidence type="ECO:0000255" key="2"/>
<evidence type="ECO:0000256" key="3">
    <source>
        <dbReference type="SAM" id="MobiDB-lite"/>
    </source>
</evidence>
<evidence type="ECO:0000269" key="4">
    <source>
    </source>
</evidence>
<evidence type="ECO:0000305" key="5"/>
<sequence length="385" mass="44172">MGDEAEIKEHLKPQASSETMDKKHNVKGKRLWQKVKYQLVEFHSLPAYLRDNEYIIGHYRSEWPIKQILLSIFTIHNETLNVWTHLIGFFLFLALTIYTATKVPSVVDLHSLQHRLPDLLRKTDLHKLHSELMARLPSSPSSWHVMDLLYNCLPERFSHGNYTDMCVLHSVREDLANLIAPLIFRPITRWPFYAFLGGAMFCLLASSTCHLLSCHSERVSYIMLRLDYAGIAALIATSFYPPVYYSFMCDPFFCNLYLGFITILGIATVLVSLLPVFQSPEFRVVRASLFFGMGFSGLAPILHKLIIFWDQPEALHTTGYEILMGLLYGLGALVYATRIPERWMPGKFDIAGHSHQLFHVLVVAGAFTHYRAGLVYLKWRDIEGC</sequence>
<name>HHP4_ARATH</name>
<keyword id="KW-0472">Membrane</keyword>
<keyword id="KW-1185">Reference proteome</keyword>
<keyword id="KW-0346">Stress response</keyword>
<keyword id="KW-0812">Transmembrane</keyword>
<keyword id="KW-1133">Transmembrane helix</keyword>
<organism>
    <name type="scientific">Arabidopsis thaliana</name>
    <name type="common">Mouse-ear cress</name>
    <dbReference type="NCBI Taxonomy" id="3702"/>
    <lineage>
        <taxon>Eukaryota</taxon>
        <taxon>Viridiplantae</taxon>
        <taxon>Streptophyta</taxon>
        <taxon>Embryophyta</taxon>
        <taxon>Tracheophyta</taxon>
        <taxon>Spermatophyta</taxon>
        <taxon>Magnoliopsida</taxon>
        <taxon>eudicotyledons</taxon>
        <taxon>Gunneridae</taxon>
        <taxon>Pentapetalae</taxon>
        <taxon>rosids</taxon>
        <taxon>malvids</taxon>
        <taxon>Brassicales</taxon>
        <taxon>Brassicaceae</taxon>
        <taxon>Camelineae</taxon>
        <taxon>Arabidopsis</taxon>
    </lineage>
</organism>
<dbReference type="EMBL" id="AL035605">
    <property type="protein sequence ID" value="CAB38307.1"/>
    <property type="molecule type" value="Genomic_DNA"/>
</dbReference>
<dbReference type="EMBL" id="AL161591">
    <property type="protein sequence ID" value="CAB80433.1"/>
    <property type="molecule type" value="Genomic_DNA"/>
</dbReference>
<dbReference type="EMBL" id="CP002687">
    <property type="protein sequence ID" value="AEE86824.1"/>
    <property type="molecule type" value="Genomic_DNA"/>
</dbReference>
<dbReference type="EMBL" id="CP002687">
    <property type="protein sequence ID" value="AEE86825.1"/>
    <property type="molecule type" value="Genomic_DNA"/>
</dbReference>
<dbReference type="EMBL" id="CP002687">
    <property type="protein sequence ID" value="ANM67403.1"/>
    <property type="molecule type" value="Genomic_DNA"/>
</dbReference>
<dbReference type="EMBL" id="AF360173">
    <property type="protein sequence ID" value="AAK25883.1"/>
    <property type="molecule type" value="mRNA"/>
</dbReference>
<dbReference type="EMBL" id="AY056348">
    <property type="protein sequence ID" value="AAL07197.1"/>
    <property type="molecule type" value="mRNA"/>
</dbReference>
<dbReference type="PIR" id="T04725">
    <property type="entry name" value="T04725"/>
</dbReference>
<dbReference type="RefSeq" id="NP_001190946.1">
    <property type="nucleotide sequence ID" value="NM_001204017.1"/>
</dbReference>
<dbReference type="RefSeq" id="NP_001329235.1">
    <property type="nucleotide sequence ID" value="NM_001342454.1"/>
</dbReference>
<dbReference type="RefSeq" id="NP_195483.1">
    <property type="nucleotide sequence ID" value="NM_119931.3"/>
</dbReference>
<dbReference type="SMR" id="Q9SZG0"/>
<dbReference type="BioGRID" id="15203">
    <property type="interactions" value="308"/>
</dbReference>
<dbReference type="FunCoup" id="Q9SZG0">
    <property type="interactions" value="2619"/>
</dbReference>
<dbReference type="IntAct" id="Q9SZG0">
    <property type="interactions" value="309"/>
</dbReference>
<dbReference type="STRING" id="3702.Q9SZG0"/>
<dbReference type="PaxDb" id="3702-AT4G37680.2"/>
<dbReference type="ProteomicsDB" id="230223"/>
<dbReference type="EnsemblPlants" id="AT4G37680.1">
    <property type="protein sequence ID" value="AT4G37680.1"/>
    <property type="gene ID" value="AT4G37680"/>
</dbReference>
<dbReference type="EnsemblPlants" id="AT4G37680.2">
    <property type="protein sequence ID" value="AT4G37680.2"/>
    <property type="gene ID" value="AT4G37680"/>
</dbReference>
<dbReference type="EnsemblPlants" id="AT4G37680.5">
    <property type="protein sequence ID" value="AT4G37680.5"/>
    <property type="gene ID" value="AT4G37680"/>
</dbReference>
<dbReference type="GeneID" id="829922"/>
<dbReference type="Gramene" id="AT4G37680.1">
    <property type="protein sequence ID" value="AT4G37680.1"/>
    <property type="gene ID" value="AT4G37680"/>
</dbReference>
<dbReference type="Gramene" id="AT4G37680.2">
    <property type="protein sequence ID" value="AT4G37680.2"/>
    <property type="gene ID" value="AT4G37680"/>
</dbReference>
<dbReference type="Gramene" id="AT4G37680.5">
    <property type="protein sequence ID" value="AT4G37680.5"/>
    <property type="gene ID" value="AT4G37680"/>
</dbReference>
<dbReference type="KEGG" id="ath:AT4G37680"/>
<dbReference type="Araport" id="AT4G37680"/>
<dbReference type="TAIR" id="AT4G37680">
    <property type="gene designation" value="HHP4"/>
</dbReference>
<dbReference type="eggNOG" id="KOG0748">
    <property type="taxonomic scope" value="Eukaryota"/>
</dbReference>
<dbReference type="HOGENOM" id="CLU_023075_4_1_1"/>
<dbReference type="InParanoid" id="Q9SZG0"/>
<dbReference type="OrthoDB" id="529367at2759"/>
<dbReference type="PhylomeDB" id="Q9SZG0"/>
<dbReference type="PRO" id="PR:Q9SZG0"/>
<dbReference type="Proteomes" id="UP000006548">
    <property type="component" value="Chromosome 4"/>
</dbReference>
<dbReference type="ExpressionAtlas" id="Q9SZG0">
    <property type="expression patterns" value="baseline and differential"/>
</dbReference>
<dbReference type="GO" id="GO:0016020">
    <property type="term" value="C:membrane"/>
    <property type="evidence" value="ECO:0007669"/>
    <property type="project" value="UniProtKB-SubCell"/>
</dbReference>
<dbReference type="GO" id="GO:0009725">
    <property type="term" value="P:response to hormone"/>
    <property type="evidence" value="ECO:0000270"/>
    <property type="project" value="TAIR"/>
</dbReference>
<dbReference type="GO" id="GO:0009744">
    <property type="term" value="P:response to sucrose"/>
    <property type="evidence" value="ECO:0000270"/>
    <property type="project" value="TAIR"/>
</dbReference>
<dbReference type="InterPro" id="IPR004254">
    <property type="entry name" value="AdipoR/HlyIII-related"/>
</dbReference>
<dbReference type="PANTHER" id="PTHR20855:SF52">
    <property type="entry name" value="ADIPONECTIN RECEPTOR PROTEIN"/>
    <property type="match status" value="1"/>
</dbReference>
<dbReference type="PANTHER" id="PTHR20855">
    <property type="entry name" value="ADIPOR/PROGESTIN RECEPTOR-RELATED"/>
    <property type="match status" value="1"/>
</dbReference>
<dbReference type="Pfam" id="PF03006">
    <property type="entry name" value="HlyIII"/>
    <property type="match status" value="1"/>
</dbReference>
<proteinExistence type="evidence at transcript level"/>
<protein>
    <recommendedName>
        <fullName>Heptahelical transmembrane protein 4</fullName>
    </recommendedName>
    <alternativeName>
        <fullName>PAQR family protein HHP4</fullName>
    </alternativeName>
</protein>
<comment type="function">
    <text evidence="1">May play a role in abiotic stress response.</text>
</comment>
<comment type="subcellular location">
    <subcellularLocation>
        <location evidence="5">Membrane</location>
        <topology evidence="5">Multi-pass membrane protein</topology>
    </subcellularLocation>
</comment>
<comment type="tissue specificity">
    <text evidence="4">Expressed in roots, leaves, stems and flowers.</text>
</comment>
<comment type="similarity">
    <text evidence="5">Belongs to the ADIPOR family.</text>
</comment>
<accession>Q9SZG0</accession>